<organism>
    <name type="scientific">Dictyostelium discoideum</name>
    <name type="common">Social amoeba</name>
    <dbReference type="NCBI Taxonomy" id="44689"/>
    <lineage>
        <taxon>Eukaryota</taxon>
        <taxon>Amoebozoa</taxon>
        <taxon>Evosea</taxon>
        <taxon>Eumycetozoa</taxon>
        <taxon>Dictyostelia</taxon>
        <taxon>Dictyosteliales</taxon>
        <taxon>Dictyosteliaceae</taxon>
        <taxon>Dictyostelium</taxon>
    </lineage>
</organism>
<proteinExistence type="inferred from homology"/>
<feature type="signal peptide" evidence="1">
    <location>
        <begin position="1"/>
        <end position="20"/>
    </location>
</feature>
<feature type="chain" id="PRO_0000327545" description="Protein psiK">
    <location>
        <begin position="21"/>
        <end position="728"/>
    </location>
</feature>
<feature type="topological domain" description="Extracellular" evidence="1">
    <location>
        <begin position="21"/>
        <end position="666"/>
    </location>
</feature>
<feature type="transmembrane region" description="Helical" evidence="1">
    <location>
        <begin position="667"/>
        <end position="687"/>
    </location>
</feature>
<feature type="topological domain" description="Cytoplasmic" evidence="1">
    <location>
        <begin position="688"/>
        <end position="728"/>
    </location>
</feature>
<feature type="domain" description="PA14" evidence="2">
    <location>
        <begin position="118"/>
        <end position="266"/>
    </location>
</feature>
<feature type="glycosylation site" description="N-linked (GlcNAc...) asparagine" evidence="1">
    <location>
        <position position="61"/>
    </location>
</feature>
<feature type="glycosylation site" description="N-linked (GlcNAc...) asparagine" evidence="1">
    <location>
        <position position="74"/>
    </location>
</feature>
<feature type="glycosylation site" description="N-linked (GlcNAc...) asparagine" evidence="1">
    <location>
        <position position="104"/>
    </location>
</feature>
<feature type="glycosylation site" description="N-linked (GlcNAc...) asparagine" evidence="1">
    <location>
        <position position="272"/>
    </location>
</feature>
<feature type="glycosylation site" description="N-linked (GlcNAc...) asparagine" evidence="1">
    <location>
        <position position="326"/>
    </location>
</feature>
<feature type="glycosylation site" description="N-linked (GlcNAc...) asparagine" evidence="1">
    <location>
        <position position="335"/>
    </location>
</feature>
<feature type="glycosylation site" description="N-linked (GlcNAc...) asparagine" evidence="1">
    <location>
        <position position="438"/>
    </location>
</feature>
<feature type="glycosylation site" description="N-linked (GlcNAc...) asparagine" evidence="1">
    <location>
        <position position="543"/>
    </location>
</feature>
<feature type="glycosylation site" description="N-linked (GlcNAc...) asparagine" evidence="1">
    <location>
        <position position="638"/>
    </location>
</feature>
<protein>
    <recommendedName>
        <fullName>Protein psiK</fullName>
    </recommendedName>
</protein>
<comment type="subcellular location">
    <subcellularLocation>
        <location evidence="3">Membrane</location>
        <topology evidence="3">Single-pass type I membrane protein</topology>
    </subcellularLocation>
</comment>
<comment type="similarity">
    <text evidence="3">Belongs to the prespore-cell-inducing factor family.</text>
</comment>
<accession>Q54DV5</accession>
<keyword id="KW-0325">Glycoprotein</keyword>
<keyword id="KW-0472">Membrane</keyword>
<keyword id="KW-1185">Reference proteome</keyword>
<keyword id="KW-0732">Signal</keyword>
<keyword id="KW-0812">Transmembrane</keyword>
<keyword id="KW-1133">Transmembrane helix</keyword>
<dbReference type="EMBL" id="AAFI02000187">
    <property type="protein sequence ID" value="EAL61363.1"/>
    <property type="molecule type" value="Genomic_DNA"/>
</dbReference>
<dbReference type="RefSeq" id="XP_629767.1">
    <property type="nucleotide sequence ID" value="XM_629765.1"/>
</dbReference>
<dbReference type="FunCoup" id="Q54DV5">
    <property type="interactions" value="13"/>
</dbReference>
<dbReference type="GlyCosmos" id="Q54DV5">
    <property type="glycosylation" value="9 sites, No reported glycans"/>
</dbReference>
<dbReference type="GlyGen" id="Q54DV5">
    <property type="glycosylation" value="9 sites"/>
</dbReference>
<dbReference type="PaxDb" id="44689-DDB0232404"/>
<dbReference type="EnsemblProtists" id="EAL61363">
    <property type="protein sequence ID" value="EAL61363"/>
    <property type="gene ID" value="DDB_G0292014"/>
</dbReference>
<dbReference type="GeneID" id="8628443"/>
<dbReference type="KEGG" id="ddi:DDB_G0292014"/>
<dbReference type="dictyBase" id="DDB_G0292014">
    <property type="gene designation" value="psiK"/>
</dbReference>
<dbReference type="VEuPathDB" id="AmoebaDB:DDB_G0292014"/>
<dbReference type="eggNOG" id="ENOG502RGIX">
    <property type="taxonomic scope" value="Eukaryota"/>
</dbReference>
<dbReference type="HOGENOM" id="CLU_024170_0_0_1"/>
<dbReference type="InParanoid" id="Q54DV5"/>
<dbReference type="OMA" id="PYHNYHF"/>
<dbReference type="PhylomeDB" id="Q54DV5"/>
<dbReference type="PRO" id="PR:Q54DV5"/>
<dbReference type="Proteomes" id="UP000002195">
    <property type="component" value="Chromosome 6"/>
</dbReference>
<dbReference type="GO" id="GO:0031012">
    <property type="term" value="C:extracellular matrix"/>
    <property type="evidence" value="ECO:0007005"/>
    <property type="project" value="dictyBase"/>
</dbReference>
<dbReference type="GO" id="GO:0005576">
    <property type="term" value="C:extracellular region"/>
    <property type="evidence" value="ECO:0000318"/>
    <property type="project" value="GO_Central"/>
</dbReference>
<dbReference type="GO" id="GO:0016020">
    <property type="term" value="C:membrane"/>
    <property type="evidence" value="ECO:0007669"/>
    <property type="project" value="UniProtKB-SubCell"/>
</dbReference>
<dbReference type="InterPro" id="IPR011874">
    <property type="entry name" value="Fibro_Slime"/>
</dbReference>
<dbReference type="InterPro" id="IPR037524">
    <property type="entry name" value="PA14/GLEYA"/>
</dbReference>
<dbReference type="InterPro" id="IPR011658">
    <property type="entry name" value="PA14_dom"/>
</dbReference>
<dbReference type="InterPro" id="IPR051154">
    <property type="entry name" value="Prespore-cell_inducing_factor"/>
</dbReference>
<dbReference type="InterPro" id="IPR001673">
    <property type="entry name" value="S_mold_repeat"/>
</dbReference>
<dbReference type="NCBIfam" id="TIGR02148">
    <property type="entry name" value="Fibro_Slime"/>
    <property type="match status" value="1"/>
</dbReference>
<dbReference type="PANTHER" id="PTHR31137:SF29">
    <property type="entry name" value="PROTEIN PSIA-RELATED"/>
    <property type="match status" value="1"/>
</dbReference>
<dbReference type="PANTHER" id="PTHR31137">
    <property type="entry name" value="PROTEIN PSIB-RELATED-RELATED"/>
    <property type="match status" value="1"/>
</dbReference>
<dbReference type="Pfam" id="PF00526">
    <property type="entry name" value="Dicty_CTDC"/>
    <property type="match status" value="4"/>
</dbReference>
<dbReference type="Pfam" id="PF07691">
    <property type="entry name" value="PA14"/>
    <property type="match status" value="1"/>
</dbReference>
<dbReference type="SMART" id="SM00758">
    <property type="entry name" value="PA14"/>
    <property type="match status" value="1"/>
</dbReference>
<dbReference type="PROSITE" id="PS51820">
    <property type="entry name" value="PA14"/>
    <property type="match status" value="1"/>
</dbReference>
<gene>
    <name type="primary">psiK</name>
    <name type="ORF">DDB_G0292014</name>
</gene>
<reference key="1">
    <citation type="journal article" date="2005" name="Nature">
        <title>The genome of the social amoeba Dictyostelium discoideum.</title>
        <authorList>
            <person name="Eichinger L."/>
            <person name="Pachebat J.A."/>
            <person name="Gloeckner G."/>
            <person name="Rajandream M.A."/>
            <person name="Sucgang R."/>
            <person name="Berriman M."/>
            <person name="Song J."/>
            <person name="Olsen R."/>
            <person name="Szafranski K."/>
            <person name="Xu Q."/>
            <person name="Tunggal B."/>
            <person name="Kummerfeld S."/>
            <person name="Madera M."/>
            <person name="Konfortov B.A."/>
            <person name="Rivero F."/>
            <person name="Bankier A.T."/>
            <person name="Lehmann R."/>
            <person name="Hamlin N."/>
            <person name="Davies R."/>
            <person name="Gaudet P."/>
            <person name="Fey P."/>
            <person name="Pilcher K."/>
            <person name="Chen G."/>
            <person name="Saunders D."/>
            <person name="Sodergren E.J."/>
            <person name="Davis P."/>
            <person name="Kerhornou A."/>
            <person name="Nie X."/>
            <person name="Hall N."/>
            <person name="Anjard C."/>
            <person name="Hemphill L."/>
            <person name="Bason N."/>
            <person name="Farbrother P."/>
            <person name="Desany B."/>
            <person name="Just E."/>
            <person name="Morio T."/>
            <person name="Rost R."/>
            <person name="Churcher C.M."/>
            <person name="Cooper J."/>
            <person name="Haydock S."/>
            <person name="van Driessche N."/>
            <person name="Cronin A."/>
            <person name="Goodhead I."/>
            <person name="Muzny D.M."/>
            <person name="Mourier T."/>
            <person name="Pain A."/>
            <person name="Lu M."/>
            <person name="Harper D."/>
            <person name="Lindsay R."/>
            <person name="Hauser H."/>
            <person name="James K.D."/>
            <person name="Quiles M."/>
            <person name="Madan Babu M."/>
            <person name="Saito T."/>
            <person name="Buchrieser C."/>
            <person name="Wardroper A."/>
            <person name="Felder M."/>
            <person name="Thangavelu M."/>
            <person name="Johnson D."/>
            <person name="Knights A."/>
            <person name="Loulseged H."/>
            <person name="Mungall K.L."/>
            <person name="Oliver K."/>
            <person name="Price C."/>
            <person name="Quail M.A."/>
            <person name="Urushihara H."/>
            <person name="Hernandez J."/>
            <person name="Rabbinowitsch E."/>
            <person name="Steffen D."/>
            <person name="Sanders M."/>
            <person name="Ma J."/>
            <person name="Kohara Y."/>
            <person name="Sharp S."/>
            <person name="Simmonds M.N."/>
            <person name="Spiegler S."/>
            <person name="Tivey A."/>
            <person name="Sugano S."/>
            <person name="White B."/>
            <person name="Walker D."/>
            <person name="Woodward J.R."/>
            <person name="Winckler T."/>
            <person name="Tanaka Y."/>
            <person name="Shaulsky G."/>
            <person name="Schleicher M."/>
            <person name="Weinstock G.M."/>
            <person name="Rosenthal A."/>
            <person name="Cox E.C."/>
            <person name="Chisholm R.L."/>
            <person name="Gibbs R.A."/>
            <person name="Loomis W.F."/>
            <person name="Platzer M."/>
            <person name="Kay R.R."/>
            <person name="Williams J.G."/>
            <person name="Dear P.H."/>
            <person name="Noegel A.A."/>
            <person name="Barrell B.G."/>
            <person name="Kuspa A."/>
        </authorList>
    </citation>
    <scope>NUCLEOTIDE SEQUENCE [LARGE SCALE GENOMIC DNA]</scope>
    <source>
        <strain>AX4</strain>
    </source>
</reference>
<sequence>MKKTFIFLYCVVLFISTTLAVEMKKTQDFNLRIFDQHPKYNNNFEPENGVLTVNLVKSILNETTGIPELTTMSNLTTVNKQGRIYSPELFKYFFADNSDAPDRNNSGKNYPLDITLTMNLDDKSNYFYDNQEFFPIDGRGFDVDQQFRNYYDDESKANPKPYHNYHFCAKITNSRFTYKGFETFRFVGDDDVWVFIDRKLVVDLGGLHIAQEKTIDLTKLGLVVNKLYVIDFFYCERHTSRSTIRIETTIELQCPWYDFCGVCTGNGLSCCNVTRDCDDGNPCTIDLCPEPTAVFDLKDISANCRHQDRTPTDWSVTDKCNTGKCNVSTGIFVTNITKCIPQNSCKAEDHCDSGLGCIFKNLCTDVCSTGACVDGKCETKNSKICIDELDKGVEDKCYEYSCDPNVGCTKKPRCLQKSENYNPCLNSFCEVSTGECKNTTIPPNLCDCQCDGKLNKCQIKSCNADGSCKPLPSLEIDDKNPCTIDACDETTGVITHTLSNKCGGCSICNGVTGDCDPVDKKCDDGNRCTTEVCLLDKATNNGNCSSKPTTECDKGDVCMVYSCDTEKGCVETPRVCPSKGKCQVGKCVPGVGCKYEPRVCKADAFCLVAECDEIVGCIQFEKKCAADNGRCQAGICKNATATEEGTCESVDFDPKPFICKTAAVVSVGVAVGVAVGGAIALGVFIFAGKKGYDYWKASQGVTMATSNANPLYESNPSGGENPIYTSPN</sequence>
<name>PSIK_DICDI</name>
<evidence type="ECO:0000255" key="1"/>
<evidence type="ECO:0000255" key="2">
    <source>
        <dbReference type="PROSITE-ProRule" id="PRU01164"/>
    </source>
</evidence>
<evidence type="ECO:0000305" key="3"/>